<dbReference type="EC" id="2.4.99.17" evidence="1"/>
<dbReference type="EMBL" id="CP000109">
    <property type="protein sequence ID" value="ABB41929.1"/>
    <property type="molecule type" value="Genomic_DNA"/>
</dbReference>
<dbReference type="SMR" id="Q31FZ4"/>
<dbReference type="STRING" id="317025.Tcr_1334"/>
<dbReference type="KEGG" id="tcx:Tcr_1334"/>
<dbReference type="eggNOG" id="COG0809">
    <property type="taxonomic scope" value="Bacteria"/>
</dbReference>
<dbReference type="HOGENOM" id="CLU_039110_1_0_6"/>
<dbReference type="OrthoDB" id="9805933at2"/>
<dbReference type="UniPathway" id="UPA00392"/>
<dbReference type="GO" id="GO:0005737">
    <property type="term" value="C:cytoplasm"/>
    <property type="evidence" value="ECO:0007669"/>
    <property type="project" value="UniProtKB-SubCell"/>
</dbReference>
<dbReference type="GO" id="GO:0051075">
    <property type="term" value="F:S-adenosylmethionine:tRNA ribosyltransferase-isomerase activity"/>
    <property type="evidence" value="ECO:0007669"/>
    <property type="project" value="UniProtKB-EC"/>
</dbReference>
<dbReference type="GO" id="GO:0008616">
    <property type="term" value="P:queuosine biosynthetic process"/>
    <property type="evidence" value="ECO:0007669"/>
    <property type="project" value="UniProtKB-UniRule"/>
</dbReference>
<dbReference type="GO" id="GO:0002099">
    <property type="term" value="P:tRNA wobble guanine modification"/>
    <property type="evidence" value="ECO:0007669"/>
    <property type="project" value="TreeGrafter"/>
</dbReference>
<dbReference type="FunFam" id="3.40.1780.10:FF:000001">
    <property type="entry name" value="S-adenosylmethionine:tRNA ribosyltransferase-isomerase"/>
    <property type="match status" value="1"/>
</dbReference>
<dbReference type="Gene3D" id="2.40.10.240">
    <property type="entry name" value="QueA-like"/>
    <property type="match status" value="1"/>
</dbReference>
<dbReference type="Gene3D" id="3.40.1780.10">
    <property type="entry name" value="QueA-like"/>
    <property type="match status" value="1"/>
</dbReference>
<dbReference type="HAMAP" id="MF_00113">
    <property type="entry name" value="QueA"/>
    <property type="match status" value="1"/>
</dbReference>
<dbReference type="InterPro" id="IPR003699">
    <property type="entry name" value="QueA"/>
</dbReference>
<dbReference type="InterPro" id="IPR042118">
    <property type="entry name" value="QueA_dom1"/>
</dbReference>
<dbReference type="InterPro" id="IPR042119">
    <property type="entry name" value="QueA_dom2"/>
</dbReference>
<dbReference type="InterPro" id="IPR036100">
    <property type="entry name" value="QueA_sf"/>
</dbReference>
<dbReference type="NCBIfam" id="NF001140">
    <property type="entry name" value="PRK00147.1"/>
    <property type="match status" value="1"/>
</dbReference>
<dbReference type="NCBIfam" id="TIGR00113">
    <property type="entry name" value="queA"/>
    <property type="match status" value="1"/>
</dbReference>
<dbReference type="PANTHER" id="PTHR30307">
    <property type="entry name" value="S-ADENOSYLMETHIONINE:TRNA RIBOSYLTRANSFERASE-ISOMERASE"/>
    <property type="match status" value="1"/>
</dbReference>
<dbReference type="PANTHER" id="PTHR30307:SF0">
    <property type="entry name" value="S-ADENOSYLMETHIONINE:TRNA RIBOSYLTRANSFERASE-ISOMERASE"/>
    <property type="match status" value="1"/>
</dbReference>
<dbReference type="Pfam" id="PF02547">
    <property type="entry name" value="Queuosine_synth"/>
    <property type="match status" value="1"/>
</dbReference>
<dbReference type="SUPFAM" id="SSF111337">
    <property type="entry name" value="QueA-like"/>
    <property type="match status" value="1"/>
</dbReference>
<gene>
    <name evidence="1" type="primary">queA</name>
    <name type="ordered locus">Tcr_1334</name>
</gene>
<sequence length="351" mass="38928">MRRQDFNFELPEALIAQQPAKERTQSRLLVMNADGSVSDCHFPDILSYVNENDCLIFNNTKVIPARLFGQKLTGGKVELLIERVLDERRVLTHIRSSNAPKSGAKLRIEEAFDAEVLGREGALFEVQLSKDEAPELTALELIEAHGHMPLPPYIEREDQLEDKERYQTVYSEKPGAVAAPTAGLHFDNDLLDKIKAKGAAAGFVTLHVGAGTFKPVQVDDISEHVMHSEVIEVLPETVELIKQTRQKGGRVIAVGTTSVRCLESAASFSENGELAPYQGETDIFITPGYDFKVVDVLLTNFHLPESTLIMLVSALAGYDRTMQAYAHAVEQKYRFFSYGDAMLVHPPTSDS</sequence>
<evidence type="ECO:0000255" key="1">
    <source>
        <dbReference type="HAMAP-Rule" id="MF_00113"/>
    </source>
</evidence>
<comment type="function">
    <text evidence="1">Transfers and isomerizes the ribose moiety from AdoMet to the 7-aminomethyl group of 7-deazaguanine (preQ1-tRNA) to give epoxyqueuosine (oQ-tRNA).</text>
</comment>
<comment type="catalytic activity">
    <reaction evidence="1">
        <text>7-aminomethyl-7-carbaguanosine(34) in tRNA + S-adenosyl-L-methionine = epoxyqueuosine(34) in tRNA + adenine + L-methionine + 2 H(+)</text>
        <dbReference type="Rhea" id="RHEA:32155"/>
        <dbReference type="Rhea" id="RHEA-COMP:10342"/>
        <dbReference type="Rhea" id="RHEA-COMP:18582"/>
        <dbReference type="ChEBI" id="CHEBI:15378"/>
        <dbReference type="ChEBI" id="CHEBI:16708"/>
        <dbReference type="ChEBI" id="CHEBI:57844"/>
        <dbReference type="ChEBI" id="CHEBI:59789"/>
        <dbReference type="ChEBI" id="CHEBI:82833"/>
        <dbReference type="ChEBI" id="CHEBI:194443"/>
        <dbReference type="EC" id="2.4.99.17"/>
    </reaction>
</comment>
<comment type="pathway">
    <text evidence="1">tRNA modification; tRNA-queuosine biosynthesis.</text>
</comment>
<comment type="subunit">
    <text evidence="1">Monomer.</text>
</comment>
<comment type="subcellular location">
    <subcellularLocation>
        <location evidence="1">Cytoplasm</location>
    </subcellularLocation>
</comment>
<comment type="similarity">
    <text evidence="1">Belongs to the QueA family.</text>
</comment>
<organism>
    <name type="scientific">Hydrogenovibrio crunogenus (strain DSM 25203 / XCL-2)</name>
    <name type="common">Thiomicrospira crunogena</name>
    <dbReference type="NCBI Taxonomy" id="317025"/>
    <lineage>
        <taxon>Bacteria</taxon>
        <taxon>Pseudomonadati</taxon>
        <taxon>Pseudomonadota</taxon>
        <taxon>Gammaproteobacteria</taxon>
        <taxon>Thiotrichales</taxon>
        <taxon>Piscirickettsiaceae</taxon>
        <taxon>Hydrogenovibrio</taxon>
    </lineage>
</organism>
<feature type="chain" id="PRO_0000231387" description="S-adenosylmethionine:tRNA ribosyltransferase-isomerase">
    <location>
        <begin position="1"/>
        <end position="351"/>
    </location>
</feature>
<reference key="1">
    <citation type="journal article" date="2006" name="PLoS Biol.">
        <title>The genome of deep-sea vent chemolithoautotroph Thiomicrospira crunogena XCL-2.</title>
        <authorList>
            <person name="Scott K.M."/>
            <person name="Sievert S.M."/>
            <person name="Abril F.N."/>
            <person name="Ball L.A."/>
            <person name="Barrett C.J."/>
            <person name="Blake R.A."/>
            <person name="Boller A.J."/>
            <person name="Chain P.S.G."/>
            <person name="Clark J.A."/>
            <person name="Davis C.R."/>
            <person name="Detter C."/>
            <person name="Do K.F."/>
            <person name="Dobrinski K.P."/>
            <person name="Faza B.I."/>
            <person name="Fitzpatrick K.A."/>
            <person name="Freyermuth S.K."/>
            <person name="Harmer T.L."/>
            <person name="Hauser L.J."/>
            <person name="Huegler M."/>
            <person name="Kerfeld C.A."/>
            <person name="Klotz M.G."/>
            <person name="Kong W.W."/>
            <person name="Land M."/>
            <person name="Lapidus A."/>
            <person name="Larimer F.W."/>
            <person name="Longo D.L."/>
            <person name="Lucas S."/>
            <person name="Malfatti S.A."/>
            <person name="Massey S.E."/>
            <person name="Martin D.D."/>
            <person name="McCuddin Z."/>
            <person name="Meyer F."/>
            <person name="Moore J.L."/>
            <person name="Ocampo L.H. Jr."/>
            <person name="Paul J.H."/>
            <person name="Paulsen I.T."/>
            <person name="Reep D.K."/>
            <person name="Ren Q."/>
            <person name="Ross R.L."/>
            <person name="Sato P.Y."/>
            <person name="Thomas P."/>
            <person name="Tinkham L.E."/>
            <person name="Zeruth G.T."/>
        </authorList>
    </citation>
    <scope>NUCLEOTIDE SEQUENCE [LARGE SCALE GENOMIC DNA]</scope>
    <source>
        <strain>DSM 25203 / XCL-2</strain>
    </source>
</reference>
<keyword id="KW-0963">Cytoplasm</keyword>
<keyword id="KW-0671">Queuosine biosynthesis</keyword>
<keyword id="KW-0949">S-adenosyl-L-methionine</keyword>
<keyword id="KW-0808">Transferase</keyword>
<accession>Q31FZ4</accession>
<proteinExistence type="inferred from homology"/>
<protein>
    <recommendedName>
        <fullName evidence="1">S-adenosylmethionine:tRNA ribosyltransferase-isomerase</fullName>
        <ecNumber evidence="1">2.4.99.17</ecNumber>
    </recommendedName>
    <alternativeName>
        <fullName evidence="1">Queuosine biosynthesis protein QueA</fullName>
    </alternativeName>
</protein>
<name>QUEA_HYDCU</name>